<dbReference type="EC" id="7.-.-.-" evidence="1"/>
<dbReference type="EMBL" id="CP001233">
    <property type="protein sequence ID" value="ACP05287.1"/>
    <property type="molecule type" value="Genomic_DNA"/>
</dbReference>
<dbReference type="SMR" id="C3LTR1"/>
<dbReference type="DNASU" id="7772248"/>
<dbReference type="KEGG" id="vcm:VCM66_0969"/>
<dbReference type="HOGENOM" id="CLU_077882_1_0_6"/>
<dbReference type="Proteomes" id="UP000001217">
    <property type="component" value="Chromosome I"/>
</dbReference>
<dbReference type="GO" id="GO:0005886">
    <property type="term" value="C:plasma membrane"/>
    <property type="evidence" value="ECO:0007669"/>
    <property type="project" value="UniProtKB-SubCell"/>
</dbReference>
<dbReference type="GO" id="GO:0009055">
    <property type="term" value="F:electron transfer activity"/>
    <property type="evidence" value="ECO:0007669"/>
    <property type="project" value="InterPro"/>
</dbReference>
<dbReference type="GO" id="GO:0010181">
    <property type="term" value="F:FMN binding"/>
    <property type="evidence" value="ECO:0007669"/>
    <property type="project" value="InterPro"/>
</dbReference>
<dbReference type="GO" id="GO:0022900">
    <property type="term" value="P:electron transport chain"/>
    <property type="evidence" value="ECO:0007669"/>
    <property type="project" value="UniProtKB-UniRule"/>
</dbReference>
<dbReference type="HAMAP" id="MF_00479">
    <property type="entry name" value="RsxG_RnfG"/>
    <property type="match status" value="1"/>
</dbReference>
<dbReference type="InterPro" id="IPR007329">
    <property type="entry name" value="FMN-bd"/>
</dbReference>
<dbReference type="InterPro" id="IPR010209">
    <property type="entry name" value="Ion_transpt_RnfG/RsxG"/>
</dbReference>
<dbReference type="NCBIfam" id="NF002519">
    <property type="entry name" value="PRK01908.1"/>
    <property type="match status" value="1"/>
</dbReference>
<dbReference type="NCBIfam" id="TIGR01947">
    <property type="entry name" value="rnfG"/>
    <property type="match status" value="1"/>
</dbReference>
<dbReference type="PANTHER" id="PTHR36118">
    <property type="entry name" value="ION-TRANSLOCATING OXIDOREDUCTASE COMPLEX SUBUNIT G"/>
    <property type="match status" value="1"/>
</dbReference>
<dbReference type="PANTHER" id="PTHR36118:SF1">
    <property type="entry name" value="ION-TRANSLOCATING OXIDOREDUCTASE COMPLEX SUBUNIT G"/>
    <property type="match status" value="1"/>
</dbReference>
<dbReference type="Pfam" id="PF04205">
    <property type="entry name" value="FMN_bind"/>
    <property type="match status" value="1"/>
</dbReference>
<dbReference type="PIRSF" id="PIRSF006091">
    <property type="entry name" value="E_trnsport_RnfG"/>
    <property type="match status" value="1"/>
</dbReference>
<dbReference type="SMART" id="SM00900">
    <property type="entry name" value="FMN_bind"/>
    <property type="match status" value="1"/>
</dbReference>
<accession>C3LTR1</accession>
<protein>
    <recommendedName>
        <fullName evidence="1">Ion-translocating oxidoreductase complex subunit G</fullName>
        <ecNumber evidence="1">7.-.-.-</ecNumber>
    </recommendedName>
    <alternativeName>
        <fullName evidence="1">Rnf electron transport complex subunit G</fullName>
    </alternativeName>
</protein>
<proteinExistence type="inferred from homology"/>
<keyword id="KW-0997">Cell inner membrane</keyword>
<keyword id="KW-1003">Cell membrane</keyword>
<keyword id="KW-0249">Electron transport</keyword>
<keyword id="KW-0285">Flavoprotein</keyword>
<keyword id="KW-0288">FMN</keyword>
<keyword id="KW-0472">Membrane</keyword>
<keyword id="KW-0597">Phosphoprotein</keyword>
<keyword id="KW-1278">Translocase</keyword>
<keyword id="KW-0812">Transmembrane</keyword>
<keyword id="KW-1133">Transmembrane helix</keyword>
<keyword id="KW-0813">Transport</keyword>
<name>RNFG_VIBCM</name>
<organism>
    <name type="scientific">Vibrio cholerae serotype O1 (strain M66-2)</name>
    <dbReference type="NCBI Taxonomy" id="579112"/>
    <lineage>
        <taxon>Bacteria</taxon>
        <taxon>Pseudomonadati</taxon>
        <taxon>Pseudomonadota</taxon>
        <taxon>Gammaproteobacteria</taxon>
        <taxon>Vibrionales</taxon>
        <taxon>Vibrionaceae</taxon>
        <taxon>Vibrio</taxon>
    </lineage>
</organism>
<gene>
    <name evidence="1" type="primary">rnfG</name>
    <name type="ordered locus">VCM66_0969</name>
</gene>
<sequence length="209" mass="22814">MLTAIRKNGLILAVFACVSTGLVALTYALTAEQIQQQEQKQLLQVLNQVIPHKYHDNPLAQACTLVNDDKLGTAKTMHAYLAQRDGQPTAIAIETIAPDGYNGEIKLIVGIANNGTVLGVRVLAHQETPGLGDKIDLRISNWVLGFNGQQVTADNQDDWKVRKDGGQFDQFTGATITPRAVVLAVKKAVEYVNQHQQQLHNQPNPCEGQ</sequence>
<evidence type="ECO:0000255" key="1">
    <source>
        <dbReference type="HAMAP-Rule" id="MF_00479"/>
    </source>
</evidence>
<reference key="1">
    <citation type="journal article" date="2008" name="PLoS ONE">
        <title>A recalibrated molecular clock and independent origins for the cholera pandemic clones.</title>
        <authorList>
            <person name="Feng L."/>
            <person name="Reeves P.R."/>
            <person name="Lan R."/>
            <person name="Ren Y."/>
            <person name="Gao C."/>
            <person name="Zhou Z."/>
            <person name="Ren Y."/>
            <person name="Cheng J."/>
            <person name="Wang W."/>
            <person name="Wang J."/>
            <person name="Qian W."/>
            <person name="Li D."/>
            <person name="Wang L."/>
        </authorList>
    </citation>
    <scope>NUCLEOTIDE SEQUENCE [LARGE SCALE GENOMIC DNA]</scope>
    <source>
        <strain>M66-2</strain>
    </source>
</reference>
<comment type="function">
    <text evidence="1">Part of a membrane-bound complex that couples electron transfer with translocation of ions across the membrane.</text>
</comment>
<comment type="cofactor">
    <cofactor evidence="1">
        <name>FMN</name>
        <dbReference type="ChEBI" id="CHEBI:58210"/>
    </cofactor>
</comment>
<comment type="subunit">
    <text evidence="1">The complex is composed of six subunits: RnfA, RnfB, RnfC, RnfD, RnfE and RnfG.</text>
</comment>
<comment type="subcellular location">
    <subcellularLocation>
        <location evidence="1">Cell inner membrane</location>
        <topology evidence="1">Single-pass membrane protein</topology>
    </subcellularLocation>
</comment>
<comment type="similarity">
    <text evidence="1">Belongs to the RnfG family.</text>
</comment>
<feature type="chain" id="PRO_1000135567" description="Ion-translocating oxidoreductase complex subunit G">
    <location>
        <begin position="1"/>
        <end position="209"/>
    </location>
</feature>
<feature type="transmembrane region" description="Helical" evidence="1">
    <location>
        <begin position="9"/>
        <end position="29"/>
    </location>
</feature>
<feature type="modified residue" description="FMN phosphoryl threonine" evidence="1">
    <location>
        <position position="175"/>
    </location>
</feature>